<accession>Q6G9M2</accession>
<keyword id="KW-0687">Ribonucleoprotein</keyword>
<keyword id="KW-0689">Ribosomal protein</keyword>
<keyword id="KW-0694">RNA-binding</keyword>
<keyword id="KW-0699">rRNA-binding</keyword>
<proteinExistence type="inferred from homology"/>
<organism>
    <name type="scientific">Staphylococcus aureus (strain MSSA476)</name>
    <dbReference type="NCBI Taxonomy" id="282459"/>
    <lineage>
        <taxon>Bacteria</taxon>
        <taxon>Bacillati</taxon>
        <taxon>Bacillota</taxon>
        <taxon>Bacilli</taxon>
        <taxon>Bacillales</taxon>
        <taxon>Staphylococcaceae</taxon>
        <taxon>Staphylococcus</taxon>
    </lineage>
</organism>
<sequence>MAKKSKIAKERKREELVNKYYELRKELKAKGDYEALRKLPRDSSPTRLTRRCKVTGRPRGVLRKFEMSRIAFREHAHKGQIPGVKKSSW</sequence>
<feature type="chain" id="PRO_0000130936" description="Small ribosomal subunit protein uS14A">
    <location>
        <begin position="1"/>
        <end position="89"/>
    </location>
</feature>
<dbReference type="EMBL" id="BX571857">
    <property type="protein sequence ID" value="CAG43054.1"/>
    <property type="molecule type" value="Genomic_DNA"/>
</dbReference>
<dbReference type="RefSeq" id="WP_001085655.1">
    <property type="nucleotide sequence ID" value="NC_002953.3"/>
</dbReference>
<dbReference type="SMR" id="Q6G9M2"/>
<dbReference type="GeneID" id="98345705"/>
<dbReference type="KEGG" id="sas:SAS1276"/>
<dbReference type="HOGENOM" id="CLU_139869_0_0_9"/>
<dbReference type="GO" id="GO:0005737">
    <property type="term" value="C:cytoplasm"/>
    <property type="evidence" value="ECO:0007669"/>
    <property type="project" value="UniProtKB-ARBA"/>
</dbReference>
<dbReference type="GO" id="GO:0015935">
    <property type="term" value="C:small ribosomal subunit"/>
    <property type="evidence" value="ECO:0007669"/>
    <property type="project" value="TreeGrafter"/>
</dbReference>
<dbReference type="GO" id="GO:0019843">
    <property type="term" value="F:rRNA binding"/>
    <property type="evidence" value="ECO:0007669"/>
    <property type="project" value="UniProtKB-UniRule"/>
</dbReference>
<dbReference type="GO" id="GO:0003735">
    <property type="term" value="F:structural constituent of ribosome"/>
    <property type="evidence" value="ECO:0007669"/>
    <property type="project" value="InterPro"/>
</dbReference>
<dbReference type="GO" id="GO:0006412">
    <property type="term" value="P:translation"/>
    <property type="evidence" value="ECO:0007669"/>
    <property type="project" value="UniProtKB-UniRule"/>
</dbReference>
<dbReference type="FunFam" id="4.10.830.10:FF:000003">
    <property type="entry name" value="30S ribosomal protein S14"/>
    <property type="match status" value="1"/>
</dbReference>
<dbReference type="Gene3D" id="4.10.830.10">
    <property type="entry name" value="30s Ribosomal Protein S14, Chain N"/>
    <property type="match status" value="1"/>
</dbReference>
<dbReference type="HAMAP" id="MF_00537">
    <property type="entry name" value="Ribosomal_uS14_1"/>
    <property type="match status" value="1"/>
</dbReference>
<dbReference type="InterPro" id="IPR001209">
    <property type="entry name" value="Ribosomal_uS14"/>
</dbReference>
<dbReference type="InterPro" id="IPR023036">
    <property type="entry name" value="Ribosomal_uS14_bac/plastid"/>
</dbReference>
<dbReference type="InterPro" id="IPR018271">
    <property type="entry name" value="Ribosomal_uS14_CS"/>
</dbReference>
<dbReference type="InterPro" id="IPR043140">
    <property type="entry name" value="Ribosomal_uS14_sf"/>
</dbReference>
<dbReference type="NCBIfam" id="NF006477">
    <property type="entry name" value="PRK08881.1"/>
    <property type="match status" value="1"/>
</dbReference>
<dbReference type="PANTHER" id="PTHR19836">
    <property type="entry name" value="30S RIBOSOMAL PROTEIN S14"/>
    <property type="match status" value="1"/>
</dbReference>
<dbReference type="PANTHER" id="PTHR19836:SF19">
    <property type="entry name" value="SMALL RIBOSOMAL SUBUNIT PROTEIN US14M"/>
    <property type="match status" value="1"/>
</dbReference>
<dbReference type="Pfam" id="PF00253">
    <property type="entry name" value="Ribosomal_S14"/>
    <property type="match status" value="1"/>
</dbReference>
<dbReference type="SUPFAM" id="SSF57716">
    <property type="entry name" value="Glucocorticoid receptor-like (DNA-binding domain)"/>
    <property type="match status" value="1"/>
</dbReference>
<dbReference type="PROSITE" id="PS00527">
    <property type="entry name" value="RIBOSOMAL_S14"/>
    <property type="match status" value="1"/>
</dbReference>
<reference key="1">
    <citation type="journal article" date="2004" name="Proc. Natl. Acad. Sci. U.S.A.">
        <title>Complete genomes of two clinical Staphylococcus aureus strains: evidence for the rapid evolution of virulence and drug resistance.</title>
        <authorList>
            <person name="Holden M.T.G."/>
            <person name="Feil E.J."/>
            <person name="Lindsay J.A."/>
            <person name="Peacock S.J."/>
            <person name="Day N.P.J."/>
            <person name="Enright M.C."/>
            <person name="Foster T.J."/>
            <person name="Moore C.E."/>
            <person name="Hurst L."/>
            <person name="Atkin R."/>
            <person name="Barron A."/>
            <person name="Bason N."/>
            <person name="Bentley S.D."/>
            <person name="Chillingworth C."/>
            <person name="Chillingworth T."/>
            <person name="Churcher C."/>
            <person name="Clark L."/>
            <person name="Corton C."/>
            <person name="Cronin A."/>
            <person name="Doggett J."/>
            <person name="Dowd L."/>
            <person name="Feltwell T."/>
            <person name="Hance Z."/>
            <person name="Harris B."/>
            <person name="Hauser H."/>
            <person name="Holroyd S."/>
            <person name="Jagels K."/>
            <person name="James K.D."/>
            <person name="Lennard N."/>
            <person name="Line A."/>
            <person name="Mayes R."/>
            <person name="Moule S."/>
            <person name="Mungall K."/>
            <person name="Ormond D."/>
            <person name="Quail M.A."/>
            <person name="Rabbinowitsch E."/>
            <person name="Rutherford K.M."/>
            <person name="Sanders M."/>
            <person name="Sharp S."/>
            <person name="Simmonds M."/>
            <person name="Stevens K."/>
            <person name="Whitehead S."/>
            <person name="Barrell B.G."/>
            <person name="Spratt B.G."/>
            <person name="Parkhill J."/>
        </authorList>
    </citation>
    <scope>NUCLEOTIDE SEQUENCE [LARGE SCALE GENOMIC DNA]</scope>
    <source>
        <strain>MSSA476</strain>
    </source>
</reference>
<evidence type="ECO:0000255" key="1">
    <source>
        <dbReference type="HAMAP-Rule" id="MF_00537"/>
    </source>
</evidence>
<evidence type="ECO:0000305" key="2"/>
<gene>
    <name evidence="1" type="primary">rpsN</name>
    <name type="synonym">rpsN2</name>
    <name type="ordered locus">SAS1276</name>
</gene>
<name>RS14_STAAS</name>
<protein>
    <recommendedName>
        <fullName evidence="1">Small ribosomal subunit protein uS14A</fullName>
    </recommendedName>
    <alternativeName>
        <fullName evidence="2">30S ribosomal protein S14</fullName>
    </alternativeName>
</protein>
<comment type="function">
    <text evidence="1">Binds 16S rRNA, required for the assembly of 30S particles and may also be responsible for determining the conformation of the 16S rRNA at the A site.</text>
</comment>
<comment type="subunit">
    <text evidence="1">Part of the 30S ribosomal subunit. Contacts proteins S3 and S10.</text>
</comment>
<comment type="similarity">
    <text evidence="1">Belongs to the universal ribosomal protein uS14 family.</text>
</comment>